<evidence type="ECO:0000250" key="1"/>
<evidence type="ECO:0000255" key="2"/>
<evidence type="ECO:0000305" key="3"/>
<accession>Q68VW8</accession>
<protein>
    <recommendedName>
        <fullName>Putative transporter AmpG 3</fullName>
    </recommendedName>
</protein>
<comment type="subcellular location">
    <subcellularLocation>
        <location evidence="1">Cell inner membrane</location>
        <topology evidence="1">Multi-pass membrane protein</topology>
    </subcellularLocation>
</comment>
<comment type="similarity">
    <text evidence="3">Belongs to the major facilitator superfamily.</text>
</comment>
<name>AMPG3_RICTY</name>
<gene>
    <name type="primary">ampG3</name>
    <name type="ordered locus">RT0768</name>
</gene>
<reference key="1">
    <citation type="journal article" date="2004" name="J. Bacteriol.">
        <title>Complete genome sequence of Rickettsia typhi and comparison with sequences of other Rickettsiae.</title>
        <authorList>
            <person name="McLeod M.P."/>
            <person name="Qin X."/>
            <person name="Karpathy S.E."/>
            <person name="Gioia J."/>
            <person name="Highlander S.K."/>
            <person name="Fox G.E."/>
            <person name="McNeill T.Z."/>
            <person name="Jiang H."/>
            <person name="Muzny D."/>
            <person name="Jacob L.S."/>
            <person name="Hawes A.C."/>
            <person name="Sodergren E."/>
            <person name="Gill R."/>
            <person name="Hume J."/>
            <person name="Morgan M."/>
            <person name="Fan G."/>
            <person name="Amin A.G."/>
            <person name="Gibbs R.A."/>
            <person name="Hong C."/>
            <person name="Yu X.-J."/>
            <person name="Walker D.H."/>
            <person name="Weinstock G.M."/>
        </authorList>
    </citation>
    <scope>NUCLEOTIDE SEQUENCE [LARGE SCALE GENOMIC DNA]</scope>
    <source>
        <strain>ATCC VR-144 / Wilmington</strain>
    </source>
</reference>
<feature type="chain" id="PRO_0000281104" description="Putative transporter AmpG 3">
    <location>
        <begin position="1"/>
        <end position="420"/>
    </location>
</feature>
<feature type="transmembrane region" description="Helical" evidence="2">
    <location>
        <begin position="6"/>
        <end position="26"/>
    </location>
</feature>
<feature type="transmembrane region" description="Helical" evidence="2">
    <location>
        <begin position="41"/>
        <end position="61"/>
    </location>
</feature>
<feature type="transmembrane region" description="Helical" evidence="2">
    <location>
        <begin position="79"/>
        <end position="99"/>
    </location>
</feature>
<feature type="transmembrane region" description="Helical" evidence="2">
    <location>
        <begin position="104"/>
        <end position="124"/>
    </location>
</feature>
<feature type="transmembrane region" description="Helical" evidence="2">
    <location>
        <begin position="141"/>
        <end position="161"/>
    </location>
</feature>
<feature type="transmembrane region" description="Helical" evidence="2">
    <location>
        <begin position="166"/>
        <end position="186"/>
    </location>
</feature>
<feature type="transmembrane region" description="Helical" evidence="2">
    <location>
        <begin position="230"/>
        <end position="250"/>
    </location>
</feature>
<feature type="transmembrane region" description="Helical" evidence="2">
    <location>
        <begin position="274"/>
        <end position="294"/>
    </location>
</feature>
<feature type="transmembrane region" description="Helical" evidence="2">
    <location>
        <begin position="297"/>
        <end position="317"/>
    </location>
</feature>
<feature type="transmembrane region" description="Helical" evidence="2">
    <location>
        <begin position="324"/>
        <end position="344"/>
    </location>
</feature>
<feature type="transmembrane region" description="Helical" evidence="2">
    <location>
        <begin position="359"/>
        <end position="381"/>
    </location>
</feature>
<feature type="transmembrane region" description="Helical" evidence="2">
    <location>
        <begin position="386"/>
        <end position="406"/>
    </location>
</feature>
<proteinExistence type="inferred from homology"/>
<dbReference type="EMBL" id="AE017197">
    <property type="protein sequence ID" value="AAU04224.1"/>
    <property type="molecule type" value="Genomic_DNA"/>
</dbReference>
<dbReference type="RefSeq" id="WP_011191199.1">
    <property type="nucleotide sequence ID" value="NC_006142.1"/>
</dbReference>
<dbReference type="SMR" id="Q68VW8"/>
<dbReference type="KEGG" id="rty:RT0768"/>
<dbReference type="eggNOG" id="COG2807">
    <property type="taxonomic scope" value="Bacteria"/>
</dbReference>
<dbReference type="HOGENOM" id="CLU_029352_1_2_5"/>
<dbReference type="OrthoDB" id="9787815at2"/>
<dbReference type="Proteomes" id="UP000000604">
    <property type="component" value="Chromosome"/>
</dbReference>
<dbReference type="GO" id="GO:0005886">
    <property type="term" value="C:plasma membrane"/>
    <property type="evidence" value="ECO:0007669"/>
    <property type="project" value="UniProtKB-SubCell"/>
</dbReference>
<dbReference type="GO" id="GO:0022857">
    <property type="term" value="F:transmembrane transporter activity"/>
    <property type="evidence" value="ECO:0007669"/>
    <property type="project" value="InterPro"/>
</dbReference>
<dbReference type="Gene3D" id="1.20.1250.20">
    <property type="entry name" value="MFS general substrate transporter like domains"/>
    <property type="match status" value="2"/>
</dbReference>
<dbReference type="InterPro" id="IPR004752">
    <property type="entry name" value="AmpG_permease/AT-1"/>
</dbReference>
<dbReference type="InterPro" id="IPR011701">
    <property type="entry name" value="MFS"/>
</dbReference>
<dbReference type="InterPro" id="IPR020846">
    <property type="entry name" value="MFS_dom"/>
</dbReference>
<dbReference type="InterPro" id="IPR036259">
    <property type="entry name" value="MFS_trans_sf"/>
</dbReference>
<dbReference type="PANTHER" id="PTHR12778:SF10">
    <property type="entry name" value="MAJOR FACILITATOR SUPERFAMILY DOMAIN-CONTAINING PROTEIN 3"/>
    <property type="match status" value="1"/>
</dbReference>
<dbReference type="PANTHER" id="PTHR12778">
    <property type="entry name" value="SOLUTE CARRIER FAMILY 33 ACETYL-COA TRANSPORTER -RELATED"/>
    <property type="match status" value="1"/>
</dbReference>
<dbReference type="Pfam" id="PF07690">
    <property type="entry name" value="MFS_1"/>
    <property type="match status" value="1"/>
</dbReference>
<dbReference type="SUPFAM" id="SSF103473">
    <property type="entry name" value="MFS general substrate transporter"/>
    <property type="match status" value="1"/>
</dbReference>
<dbReference type="PROSITE" id="PS50850">
    <property type="entry name" value="MFS"/>
    <property type="match status" value="1"/>
</dbReference>
<organism>
    <name type="scientific">Rickettsia typhi (strain ATCC VR-144 / Wilmington)</name>
    <dbReference type="NCBI Taxonomy" id="257363"/>
    <lineage>
        <taxon>Bacteria</taxon>
        <taxon>Pseudomonadati</taxon>
        <taxon>Pseudomonadota</taxon>
        <taxon>Alphaproteobacteria</taxon>
        <taxon>Rickettsiales</taxon>
        <taxon>Rickettsiaceae</taxon>
        <taxon>Rickettsieae</taxon>
        <taxon>Rickettsia</taxon>
        <taxon>typhus group</taxon>
    </lineage>
</organism>
<sequence>MYKKLYLIGILLLGLISGLTFNLIFFTVPYQLSEAKYTTDIVGSISLAAFPYCLKVIWSPFIDKYSIPFLGVKFGHRRGWALVSQIFLILTMMWFLKRSPCNNLCITAIILFIIAFCSSTQDIVLDAYRIERTTSKKELSIAFTFSSIGFRLGMLLGSVGALYSSIIFGWNTVYKFALFITMVGPIVILCIKEPELKTKRNTTNNLIDLQQYFEVIKKSIISFKNEQKYLLLIILFVFLYKAADSIPMAMSIPLFLDLSFTTHEIAVIYKAYGLLIMIVGGTLGGILAAKIGIFHSVLIGGVIQLLSPIMFMILATIGYDIKTFIITITIQNFCSGFAGTIISIYFASLCNSEFVATQYSISSSFSSLSRIILASLGGICAKHLTWPVFFLCNTLFSMLFIPIFYIYRKKLHFINYSKKI</sequence>
<keyword id="KW-0997">Cell inner membrane</keyword>
<keyword id="KW-1003">Cell membrane</keyword>
<keyword id="KW-0472">Membrane</keyword>
<keyword id="KW-0812">Transmembrane</keyword>
<keyword id="KW-1133">Transmembrane helix</keyword>
<keyword id="KW-0813">Transport</keyword>